<keyword id="KW-0045">Antibiotic biosynthesis</keyword>
<keyword id="KW-0868">Chloride</keyword>
<keyword id="KW-0903">Direct protein sequencing</keyword>
<keyword id="KW-0560">Oxidoreductase</keyword>
<keyword id="KW-0575">Peroxidase</keyword>
<name>PRXC_BURPY</name>
<evidence type="ECO:0000255" key="1"/>
<evidence type="ECO:0000269" key="2">
    <source>
    </source>
</evidence>
<evidence type="ECO:0000305" key="3"/>
<proteinExistence type="evidence at protein level"/>
<sequence length="278" mass="30454">MPYVTTKDNVEIFYKDWGPKDAQPIVFHHGWPLSGDDWDAQMLFFVQKGYRVIAHDRRGHGRSAQVSDGHDMDHYAADAFAVVEALDLRNAVHIGHSTGGGEVARYVANDGQPAGRVAKAVLVSAVPPLMLKTESNPEGLPIEVFDGFRKALADNRAQFFLDVPTGPFYGFNRAGATVHQGVIRNWWRQGMEGSAKAHYDGIKAFSETDQTEDLKSITVPTLVLHGEDDQIVPIADAALKSIKLLQNGTLKTYPGYSHGMLTVNADVLNADLLAFVQA</sequence>
<gene>
    <name type="primary">cpo</name>
    <name type="synonym">cpoP</name>
</gene>
<reference key="1">
    <citation type="journal article" date="1993" name="Gene">
        <title>Chloroperoxidase-encoding gene from Pseudomonas pyrrocinia: sequence, expression in heterologous hosts, and purification of the enzyme.</title>
        <authorList>
            <person name="Wolfframm C."/>
            <person name="Lingens F."/>
            <person name="Mutzel R."/>
            <person name="van Pee K.-H."/>
        </authorList>
    </citation>
    <scope>NUCLEOTIDE SEQUENCE [GENOMIC DNA]</scope>
    <scope>PARTIAL PROTEIN SEQUENCE</scope>
</reference>
<reference key="2">
    <citation type="journal article" date="1995" name="Biochim. Biophys. Acta">
        <title>A catalytic triad is required by the non-heme haloperoxidases to perform halogenation.</title>
        <authorList>
            <person name="Pelletier I."/>
            <person name="Altenbuchner J."/>
            <person name="Mattes R."/>
        </authorList>
    </citation>
    <scope>MUTAGENESIS</scope>
</reference>
<protein>
    <recommendedName>
        <fullName>Non-heme chloroperoxidase</fullName>
        <ecNumber>1.11.1.-</ecNumber>
    </recommendedName>
    <alternativeName>
        <fullName>Chloride peroxidase</fullName>
    </alternativeName>
    <alternativeName>
        <fullName>Chloroperoxidase P</fullName>
        <shortName>CPO-P</shortName>
    </alternativeName>
</protein>
<comment type="function">
    <text>Chlorinates and brominates suitable organic compounds. Involved in the biosynthesis of the antibiotic pyrrolnitrin.</text>
</comment>
<comment type="subunit">
    <text>Homodimer.</text>
</comment>
<comment type="similarity">
    <text evidence="3">Belongs to the AB hydrolase superfamily. Bacterial non-heme haloperoxidase / perhydrolase family.</text>
</comment>
<dbReference type="EC" id="1.11.1.-"/>
<dbReference type="EMBL" id="M60743">
    <property type="protein sequence ID" value="AAA02837.1"/>
    <property type="molecule type" value="Unassigned_DNA"/>
</dbReference>
<dbReference type="PIR" id="JN0828">
    <property type="entry name" value="JN0828"/>
</dbReference>
<dbReference type="SMR" id="P25026"/>
<dbReference type="ESTHER" id="psepy-prxc">
    <property type="family name" value="Haloperoxidase"/>
</dbReference>
<dbReference type="PeroxiBase" id="5912">
    <property type="entry name" value="PpyrHalNPrx"/>
</dbReference>
<dbReference type="GO" id="GO:0016691">
    <property type="term" value="F:chloride peroxidase activity"/>
    <property type="evidence" value="ECO:0007669"/>
    <property type="project" value="UniProtKB-EC"/>
</dbReference>
<dbReference type="GO" id="GO:0017000">
    <property type="term" value="P:antibiotic biosynthetic process"/>
    <property type="evidence" value="ECO:0007669"/>
    <property type="project" value="UniProtKB-KW"/>
</dbReference>
<dbReference type="Gene3D" id="3.40.50.1820">
    <property type="entry name" value="alpha/beta hydrolase"/>
    <property type="match status" value="1"/>
</dbReference>
<dbReference type="InterPro" id="IPR050471">
    <property type="entry name" value="AB_hydrolase"/>
</dbReference>
<dbReference type="InterPro" id="IPR000073">
    <property type="entry name" value="AB_hydrolase_1"/>
</dbReference>
<dbReference type="InterPro" id="IPR029058">
    <property type="entry name" value="AB_hydrolase_fold"/>
</dbReference>
<dbReference type="InterPro" id="IPR000639">
    <property type="entry name" value="Epox_hydrolase-like"/>
</dbReference>
<dbReference type="PANTHER" id="PTHR43433">
    <property type="entry name" value="HYDROLASE, ALPHA/BETA FOLD FAMILY PROTEIN"/>
    <property type="match status" value="1"/>
</dbReference>
<dbReference type="PANTHER" id="PTHR43433:SF3">
    <property type="entry name" value="NON-HEME CHLOROPEROXIDASE"/>
    <property type="match status" value="1"/>
</dbReference>
<dbReference type="Pfam" id="PF00561">
    <property type="entry name" value="Abhydrolase_1"/>
    <property type="match status" value="1"/>
</dbReference>
<dbReference type="PRINTS" id="PR00111">
    <property type="entry name" value="ABHYDROLASE"/>
</dbReference>
<dbReference type="PRINTS" id="PR00412">
    <property type="entry name" value="EPOXHYDRLASE"/>
</dbReference>
<dbReference type="SUPFAM" id="SSF53474">
    <property type="entry name" value="alpha/beta-Hydrolases"/>
    <property type="match status" value="1"/>
</dbReference>
<accession>P25026</accession>
<organism>
    <name type="scientific">Burkholderia pyrrocinia</name>
    <name type="common">Pseudomonas pyrrocinia</name>
    <dbReference type="NCBI Taxonomy" id="60550"/>
    <lineage>
        <taxon>Bacteria</taxon>
        <taxon>Pseudomonadati</taxon>
        <taxon>Pseudomonadota</taxon>
        <taxon>Betaproteobacteria</taxon>
        <taxon>Burkholderiales</taxon>
        <taxon>Burkholderiaceae</taxon>
        <taxon>Burkholderia</taxon>
        <taxon>Burkholderia cepacia complex</taxon>
    </lineage>
</organism>
<feature type="initiator methionine" description="Removed">
    <location>
        <position position="1"/>
    </location>
</feature>
<feature type="chain" id="PRO_0000207061" description="Non-heme chloroperoxidase">
    <location>
        <begin position="2"/>
        <end position="278"/>
    </location>
</feature>
<feature type="domain" description="AB hydrolase-1" evidence="1">
    <location>
        <begin position="24"/>
        <end position="259"/>
    </location>
</feature>
<feature type="active site">
    <location>
        <position position="97"/>
    </location>
</feature>
<feature type="active site">
    <location>
        <position position="229"/>
    </location>
</feature>
<feature type="active site">
    <location>
        <position position="258"/>
    </location>
</feature>
<feature type="mutagenesis site" description="Very low activity." evidence="2">
    <original>S</original>
    <variation>A</variation>
    <variation>C</variation>
    <location>
        <position position="97"/>
    </location>
</feature>
<feature type="mutagenesis site" description="Loss of activity." evidence="2">
    <original>D</original>
    <variation>A</variation>
    <location>
        <position position="229"/>
    </location>
</feature>
<feature type="mutagenesis site" description="Loss of activity." evidence="2">
    <original>H</original>
    <variation>Q</variation>
    <location>
        <position position="258"/>
    </location>
</feature>